<name>COPA1_HELPX</name>
<protein>
    <recommendedName>
        <fullName>Copper-transporting ATPase</fullName>
        <ecNumber>7.2.2.9</ecNumber>
    </recommendedName>
</protein>
<evidence type="ECO:0000250" key="1"/>
<evidence type="ECO:0000255" key="2"/>
<evidence type="ECO:0000255" key="3">
    <source>
        <dbReference type="PROSITE-ProRule" id="PRU00280"/>
    </source>
</evidence>
<evidence type="ECO:0000305" key="4"/>
<dbReference type="EC" id="7.2.2.9"/>
<dbReference type="EMBL" id="L33259">
    <property type="protein sequence ID" value="AAB67320.1"/>
    <property type="status" value="ALT_FRAME"/>
    <property type="molecule type" value="Genomic_DNA"/>
</dbReference>
<dbReference type="SMR" id="P77871"/>
<dbReference type="GO" id="GO:0005886">
    <property type="term" value="C:plasma membrane"/>
    <property type="evidence" value="ECO:0007669"/>
    <property type="project" value="UniProtKB-SubCell"/>
</dbReference>
<dbReference type="GO" id="GO:0005524">
    <property type="term" value="F:ATP binding"/>
    <property type="evidence" value="ECO:0007669"/>
    <property type="project" value="UniProtKB-KW"/>
</dbReference>
<dbReference type="GO" id="GO:0016887">
    <property type="term" value="F:ATP hydrolysis activity"/>
    <property type="evidence" value="ECO:0007669"/>
    <property type="project" value="InterPro"/>
</dbReference>
<dbReference type="GO" id="GO:0005507">
    <property type="term" value="F:copper ion binding"/>
    <property type="evidence" value="ECO:0007669"/>
    <property type="project" value="TreeGrafter"/>
</dbReference>
<dbReference type="GO" id="GO:0043682">
    <property type="term" value="F:P-type divalent copper transporter activity"/>
    <property type="evidence" value="ECO:0007669"/>
    <property type="project" value="UniProtKB-EC"/>
</dbReference>
<dbReference type="GO" id="GO:0055070">
    <property type="term" value="P:copper ion homeostasis"/>
    <property type="evidence" value="ECO:0007669"/>
    <property type="project" value="TreeGrafter"/>
</dbReference>
<dbReference type="CDD" id="cd00371">
    <property type="entry name" value="HMA"/>
    <property type="match status" value="1"/>
</dbReference>
<dbReference type="CDD" id="cd02094">
    <property type="entry name" value="P-type_ATPase_Cu-like"/>
    <property type="match status" value="1"/>
</dbReference>
<dbReference type="FunFam" id="3.30.70.100:FF:000001">
    <property type="entry name" value="ATPase copper transporting beta"/>
    <property type="match status" value="1"/>
</dbReference>
<dbReference type="FunFam" id="2.70.150.10:FF:000020">
    <property type="entry name" value="Copper-exporting P-type ATPase A"/>
    <property type="match status" value="1"/>
</dbReference>
<dbReference type="Gene3D" id="3.30.70.100">
    <property type="match status" value="1"/>
</dbReference>
<dbReference type="Gene3D" id="3.40.1110.10">
    <property type="entry name" value="Calcium-transporting ATPase, cytoplasmic domain N"/>
    <property type="match status" value="1"/>
</dbReference>
<dbReference type="Gene3D" id="2.70.150.10">
    <property type="entry name" value="Calcium-transporting ATPase, cytoplasmic transduction domain A"/>
    <property type="match status" value="1"/>
</dbReference>
<dbReference type="Gene3D" id="3.40.50.1000">
    <property type="entry name" value="HAD superfamily/HAD-like"/>
    <property type="match status" value="1"/>
</dbReference>
<dbReference type="InterPro" id="IPR023299">
    <property type="entry name" value="ATPase_P-typ_cyto_dom_N"/>
</dbReference>
<dbReference type="InterPro" id="IPR018303">
    <property type="entry name" value="ATPase_P-typ_P_site"/>
</dbReference>
<dbReference type="InterPro" id="IPR023298">
    <property type="entry name" value="ATPase_P-typ_TM_dom_sf"/>
</dbReference>
<dbReference type="InterPro" id="IPR008250">
    <property type="entry name" value="ATPase_P-typ_transduc_dom_A_sf"/>
</dbReference>
<dbReference type="InterPro" id="IPR036412">
    <property type="entry name" value="HAD-like_sf"/>
</dbReference>
<dbReference type="InterPro" id="IPR023214">
    <property type="entry name" value="HAD_sf"/>
</dbReference>
<dbReference type="InterPro" id="IPR017969">
    <property type="entry name" value="Heavy-metal-associated_CS"/>
</dbReference>
<dbReference type="InterPro" id="IPR006121">
    <property type="entry name" value="HMA_dom"/>
</dbReference>
<dbReference type="InterPro" id="IPR036163">
    <property type="entry name" value="HMA_dom_sf"/>
</dbReference>
<dbReference type="InterPro" id="IPR027256">
    <property type="entry name" value="P-typ_ATPase_IB"/>
</dbReference>
<dbReference type="InterPro" id="IPR001757">
    <property type="entry name" value="P_typ_ATPase"/>
</dbReference>
<dbReference type="InterPro" id="IPR044492">
    <property type="entry name" value="P_typ_ATPase_HD_dom"/>
</dbReference>
<dbReference type="NCBIfam" id="TIGR01511">
    <property type="entry name" value="ATPase-IB1_Cu"/>
    <property type="match status" value="1"/>
</dbReference>
<dbReference type="NCBIfam" id="TIGR01525">
    <property type="entry name" value="ATPase-IB_hvy"/>
    <property type="match status" value="1"/>
</dbReference>
<dbReference type="NCBIfam" id="TIGR01494">
    <property type="entry name" value="ATPase_P-type"/>
    <property type="match status" value="1"/>
</dbReference>
<dbReference type="PANTHER" id="PTHR43520">
    <property type="entry name" value="ATP7, ISOFORM B"/>
    <property type="match status" value="1"/>
</dbReference>
<dbReference type="PANTHER" id="PTHR43520:SF8">
    <property type="entry name" value="P-TYPE CU(+) TRANSPORTER"/>
    <property type="match status" value="1"/>
</dbReference>
<dbReference type="Pfam" id="PF00122">
    <property type="entry name" value="E1-E2_ATPase"/>
    <property type="match status" value="1"/>
</dbReference>
<dbReference type="Pfam" id="PF00403">
    <property type="entry name" value="HMA"/>
    <property type="match status" value="1"/>
</dbReference>
<dbReference type="Pfam" id="PF00702">
    <property type="entry name" value="Hydrolase"/>
    <property type="match status" value="1"/>
</dbReference>
<dbReference type="PRINTS" id="PR00119">
    <property type="entry name" value="CATATPASE"/>
</dbReference>
<dbReference type="PRINTS" id="PR00943">
    <property type="entry name" value="CUATPASE"/>
</dbReference>
<dbReference type="SFLD" id="SFLDS00003">
    <property type="entry name" value="Haloacid_Dehalogenase"/>
    <property type="match status" value="1"/>
</dbReference>
<dbReference type="SFLD" id="SFLDF00027">
    <property type="entry name" value="p-type_atpase"/>
    <property type="match status" value="1"/>
</dbReference>
<dbReference type="SUPFAM" id="SSF81653">
    <property type="entry name" value="Calcium ATPase, transduction domain A"/>
    <property type="match status" value="1"/>
</dbReference>
<dbReference type="SUPFAM" id="SSF81665">
    <property type="entry name" value="Calcium ATPase, transmembrane domain M"/>
    <property type="match status" value="1"/>
</dbReference>
<dbReference type="SUPFAM" id="SSF56784">
    <property type="entry name" value="HAD-like"/>
    <property type="match status" value="1"/>
</dbReference>
<dbReference type="SUPFAM" id="SSF55008">
    <property type="entry name" value="HMA, heavy metal-associated domain"/>
    <property type="match status" value="1"/>
</dbReference>
<dbReference type="SUPFAM" id="SSF81660">
    <property type="entry name" value="Metal cation-transporting ATPase, ATP-binding domain N"/>
    <property type="match status" value="1"/>
</dbReference>
<dbReference type="PROSITE" id="PS00154">
    <property type="entry name" value="ATPASE_E1_E2"/>
    <property type="match status" value="1"/>
</dbReference>
<dbReference type="PROSITE" id="PS01047">
    <property type="entry name" value="HMA_1"/>
    <property type="match status" value="1"/>
</dbReference>
<dbReference type="PROSITE" id="PS50846">
    <property type="entry name" value="HMA_2"/>
    <property type="match status" value="1"/>
</dbReference>
<organism>
    <name type="scientific">Helicobacter pylori</name>
    <name type="common">Campylobacter pylori</name>
    <dbReference type="NCBI Taxonomy" id="210"/>
    <lineage>
        <taxon>Bacteria</taxon>
        <taxon>Pseudomonadati</taxon>
        <taxon>Campylobacterota</taxon>
        <taxon>Epsilonproteobacteria</taxon>
        <taxon>Campylobacterales</taxon>
        <taxon>Helicobacteraceae</taxon>
        <taxon>Helicobacter</taxon>
    </lineage>
</organism>
<sequence>MKESFYIEGMTCTACSSGIERSLGRKSFVKKIEVNLLNKSANIEFNENETNLDEIFKLIEKLGYSPKKTLAEEKKEFFSPNVKLALAVIFTLFVVYLSMGAMLSPSLLPKSLLAIDNHSNFLNACLQLIGTLIVMHWGRDFYIQGFKALWHRQPNMSSLIAIGTSAALISSLWQLYLVYTDHYTDQWSYGHYYFESVCVILMFVMVGKRIENVSKDKALDAMQALMKNAPKTALKIQNDQQIEVLVDSIVVGDILKVLPGTLIAVDGEIIEGEGELDESMLSGEALPVYKKVGDKVFSGTFNSHTSFLMKATQNNKNSTLSQIVEMIHNAQSSKAEISRLADKVSSVFVPSVIAIAILAFVVWLIIAPKPDFWWNFGIALEVFVSVLVISCPCALGLATLMSILVANQKASSLGLFFKDAKSLEKARLVNTIVFDKTGTLTNGKPVVKSVHSKIELLELLSLANSIEKSSEHVIAKGIVEYAKEHNAPLKEMSEVKVKTGFGISAKTDYQGTKEIIKVGNSEFFNPINTLEIQENGILVLVGRAINEKEDELLGAFVLEDLPKKGVKEHVAQIKNLGINTFLLSGDNRENVKKCALELGIDGYISNAKPQDKLNKIKELKEKGRIVMMVGDGLNDAPSLAMSDVAVVMAKGSDVSVQAADIVSFNNDIKSVYSAIKLSQATIKNIKENLFWAFCYNSVFIPLACGVLYKANIMLSPAIAGLAMSLSSVSVVLNSQRLRNFKIKDH</sequence>
<comment type="function">
    <text>Probably involved in copper export.</text>
</comment>
<comment type="catalytic activity">
    <reaction>
        <text>Cu(2+)(in) + ATP + H2O = Cu(2+)(out) + ADP + phosphate + H(+)</text>
        <dbReference type="Rhea" id="RHEA:10376"/>
        <dbReference type="ChEBI" id="CHEBI:15377"/>
        <dbReference type="ChEBI" id="CHEBI:15378"/>
        <dbReference type="ChEBI" id="CHEBI:29036"/>
        <dbReference type="ChEBI" id="CHEBI:30616"/>
        <dbReference type="ChEBI" id="CHEBI:43474"/>
        <dbReference type="ChEBI" id="CHEBI:456216"/>
        <dbReference type="EC" id="7.2.2.9"/>
    </reaction>
</comment>
<comment type="subcellular location">
    <subcellularLocation>
        <location>Cell membrane</location>
        <topology>Multi-pass membrane protein</topology>
    </subcellularLocation>
</comment>
<comment type="similarity">
    <text evidence="4">Belongs to the cation transport ATPase (P-type) (TC 3.A.3) family. Type IB subfamily.</text>
</comment>
<comment type="sequence caution" evidence="4">
    <conflict type="frameshift">
        <sequence resource="EMBL-CDS" id="AAB67320"/>
    </conflict>
</comment>
<reference key="1">
    <citation type="journal article" date="1995" name="Mol. Microbiol.">
        <title>Nucleotide sequence and mutational analysis indicate that two Helicobacter pylori genes encode a P-type ATPase and a cation-binding protein associated with copper transport.</title>
        <authorList>
            <person name="Ge Z."/>
            <person name="Hiratsuka K."/>
            <person name="Taylor D.E."/>
        </authorList>
    </citation>
    <scope>NUCLEOTIDE SEQUENCE [GENOMIC DNA]</scope>
    <source>
        <strain>ATCC 43629 / JCM 7656 / NCTC 11639 / UA802</strain>
    </source>
</reference>
<reference key="2">
    <citation type="journal article" date="1996" name="FEMS Microbiol. Lett.">
        <title>Helicobacter pylori genes hpcopA and hpcopP constitute a cop operon involved in copper export.</title>
        <authorList>
            <person name="Ge Z."/>
            <person name="Taylor D.E."/>
        </authorList>
    </citation>
    <scope>NUCLEOTIDE SEQUENCE [GENOMIC DNA]</scope>
    <source>
        <strain>ATCC 43629 / JCM 7656 / NCTC 11639 / UA802</strain>
    </source>
</reference>
<proteinExistence type="inferred from homology"/>
<keyword id="KW-0067">ATP-binding</keyword>
<keyword id="KW-1003">Cell membrane</keyword>
<keyword id="KW-0186">Copper</keyword>
<keyword id="KW-0187">Copper transport</keyword>
<keyword id="KW-0406">Ion transport</keyword>
<keyword id="KW-0460">Magnesium</keyword>
<keyword id="KW-0472">Membrane</keyword>
<keyword id="KW-0479">Metal-binding</keyword>
<keyword id="KW-0547">Nucleotide-binding</keyword>
<keyword id="KW-0597">Phosphoprotein</keyword>
<keyword id="KW-1278">Translocase</keyword>
<keyword id="KW-0812">Transmembrane</keyword>
<keyword id="KW-1133">Transmembrane helix</keyword>
<keyword id="KW-0813">Transport</keyword>
<gene>
    <name type="primary">copA</name>
</gene>
<feature type="chain" id="PRO_0000046171" description="Copper-transporting ATPase">
    <location>
        <begin position="1"/>
        <end position="745"/>
    </location>
</feature>
<feature type="topological domain" description="Cytoplasmic" evidence="2">
    <location>
        <begin position="1"/>
        <end position="83"/>
    </location>
</feature>
<feature type="transmembrane region" description="Helical" evidence="2">
    <location>
        <begin position="84"/>
        <end position="104"/>
    </location>
</feature>
<feature type="topological domain" description="Extracellular" evidence="2">
    <location>
        <begin position="105"/>
        <end position="124"/>
    </location>
</feature>
<feature type="transmembrane region" description="Helical" evidence="2">
    <location>
        <begin position="125"/>
        <end position="144"/>
    </location>
</feature>
<feature type="topological domain" description="Cytoplasmic" evidence="2">
    <location>
        <begin position="145"/>
        <end position="151"/>
    </location>
</feature>
<feature type="transmembrane region" description="Helical" evidence="2">
    <location>
        <begin position="152"/>
        <end position="172"/>
    </location>
</feature>
<feature type="topological domain" description="Extracellular" evidence="2">
    <location>
        <begin position="173"/>
        <end position="194"/>
    </location>
</feature>
<feature type="transmembrane region" description="Helical" evidence="2">
    <location>
        <begin position="195"/>
        <end position="215"/>
    </location>
</feature>
<feature type="topological domain" description="Cytoplasmic" evidence="2">
    <location>
        <begin position="216"/>
        <end position="343"/>
    </location>
</feature>
<feature type="transmembrane region" description="Helical" evidence="2">
    <location>
        <begin position="344"/>
        <end position="366"/>
    </location>
</feature>
<feature type="topological domain" description="Extracellular" evidence="2">
    <location>
        <begin position="367"/>
        <end position="379"/>
    </location>
</feature>
<feature type="transmembrane region" description="Helical" evidence="2">
    <location>
        <begin position="380"/>
        <end position="397"/>
    </location>
</feature>
<feature type="topological domain" description="Cytoplasmic" evidence="2">
    <location>
        <begin position="398"/>
        <end position="685"/>
    </location>
</feature>
<feature type="transmembrane region" description="Helical" evidence="2">
    <location>
        <begin position="686"/>
        <end position="705"/>
    </location>
</feature>
<feature type="topological domain" description="Extracellular" evidence="2">
    <location>
        <begin position="706"/>
        <end position="716"/>
    </location>
</feature>
<feature type="transmembrane region" description="Helical" evidence="2">
    <location>
        <begin position="717"/>
        <end position="735"/>
    </location>
</feature>
<feature type="topological domain" description="Cytoplasmic" evidence="2">
    <location>
        <begin position="736"/>
        <end position="745"/>
    </location>
</feature>
<feature type="domain" description="HMA" evidence="3">
    <location>
        <begin position="1"/>
        <end position="67"/>
    </location>
</feature>
<feature type="active site" description="4-aspartylphosphate intermediate" evidence="1">
    <location>
        <position position="435"/>
    </location>
</feature>
<feature type="binding site" evidence="3">
    <location>
        <position position="12"/>
    </location>
    <ligand>
        <name>Cu cation</name>
        <dbReference type="ChEBI" id="CHEBI:23378"/>
    </ligand>
</feature>
<feature type="binding site" evidence="3">
    <location>
        <position position="15"/>
    </location>
    <ligand>
        <name>Cu cation</name>
        <dbReference type="ChEBI" id="CHEBI:23378"/>
    </ligand>
</feature>
<feature type="binding site">
    <location>
        <position position="631"/>
    </location>
    <ligand>
        <name>Mg(2+)</name>
        <dbReference type="ChEBI" id="CHEBI:18420"/>
    </ligand>
</feature>
<feature type="binding site">
    <location>
        <position position="635"/>
    </location>
    <ligand>
        <name>Mg(2+)</name>
        <dbReference type="ChEBI" id="CHEBI:18420"/>
    </ligand>
</feature>
<accession>P77871</accession>